<evidence type="ECO:0000255" key="1">
    <source>
        <dbReference type="HAMAP-Rule" id="MF_01810"/>
    </source>
</evidence>
<comment type="function">
    <text evidence="1">Required for the insertion and/or proper folding and/or complex formation of integral membrane proteins into the membrane. Involved in integration of membrane proteins that insert both dependently and independently of the Sec translocase complex, as well as at least some lipoproteins. Aids folding of multispanning membrane proteins.</text>
</comment>
<comment type="subunit">
    <text evidence="1">Interacts with the Sec translocase complex via SecD. Specifically interacts with transmembrane segments of nascent integral membrane proteins during membrane integration.</text>
</comment>
<comment type="subcellular location">
    <subcellularLocation>
        <location evidence="1">Cell inner membrane</location>
        <topology evidence="1">Multi-pass membrane protein</topology>
    </subcellularLocation>
</comment>
<comment type="similarity">
    <text evidence="1">Belongs to the OXA1/ALB3/YidC family. Type 1 subfamily.</text>
</comment>
<gene>
    <name evidence="1" type="primary">yidC</name>
    <name type="ordered locus">lpp3074</name>
</gene>
<reference key="1">
    <citation type="journal article" date="2004" name="Nat. Genet.">
        <title>Evidence in the Legionella pneumophila genome for exploitation of host cell functions and high genome plasticity.</title>
        <authorList>
            <person name="Cazalet C."/>
            <person name="Rusniok C."/>
            <person name="Brueggemann H."/>
            <person name="Zidane N."/>
            <person name="Magnier A."/>
            <person name="Ma L."/>
            <person name="Tichit M."/>
            <person name="Jarraud S."/>
            <person name="Bouchier C."/>
            <person name="Vandenesch F."/>
            <person name="Kunst F."/>
            <person name="Etienne J."/>
            <person name="Glaser P."/>
            <person name="Buchrieser C."/>
        </authorList>
    </citation>
    <scope>NUCLEOTIDE SEQUENCE [LARGE SCALE GENOMIC DNA]</scope>
    <source>
        <strain>Paris</strain>
    </source>
</reference>
<accession>Q5X0M2</accession>
<keyword id="KW-0997">Cell inner membrane</keyword>
<keyword id="KW-1003">Cell membrane</keyword>
<keyword id="KW-0143">Chaperone</keyword>
<keyword id="KW-0472">Membrane</keyword>
<keyword id="KW-0653">Protein transport</keyword>
<keyword id="KW-0812">Transmembrane</keyword>
<keyword id="KW-1133">Transmembrane helix</keyword>
<keyword id="KW-0813">Transport</keyword>
<dbReference type="EMBL" id="CR628336">
    <property type="protein sequence ID" value="CAH14227.1"/>
    <property type="molecule type" value="Genomic_DNA"/>
</dbReference>
<dbReference type="RefSeq" id="WP_015961918.1">
    <property type="nucleotide sequence ID" value="NC_006368.1"/>
</dbReference>
<dbReference type="SMR" id="Q5X0M2"/>
<dbReference type="KEGG" id="lpp:lpp3074"/>
<dbReference type="LegioList" id="lpp3074"/>
<dbReference type="HOGENOM" id="CLU_016535_3_0_6"/>
<dbReference type="GO" id="GO:0005886">
    <property type="term" value="C:plasma membrane"/>
    <property type="evidence" value="ECO:0007669"/>
    <property type="project" value="UniProtKB-SubCell"/>
</dbReference>
<dbReference type="GO" id="GO:0032977">
    <property type="term" value="F:membrane insertase activity"/>
    <property type="evidence" value="ECO:0007669"/>
    <property type="project" value="InterPro"/>
</dbReference>
<dbReference type="GO" id="GO:0051205">
    <property type="term" value="P:protein insertion into membrane"/>
    <property type="evidence" value="ECO:0007669"/>
    <property type="project" value="TreeGrafter"/>
</dbReference>
<dbReference type="GO" id="GO:0015031">
    <property type="term" value="P:protein transport"/>
    <property type="evidence" value="ECO:0007669"/>
    <property type="project" value="UniProtKB-KW"/>
</dbReference>
<dbReference type="CDD" id="cd20070">
    <property type="entry name" value="5TM_YidC_Alb3"/>
    <property type="match status" value="1"/>
</dbReference>
<dbReference type="CDD" id="cd19961">
    <property type="entry name" value="EcYidC-like_peri"/>
    <property type="match status" value="1"/>
</dbReference>
<dbReference type="Gene3D" id="2.70.98.90">
    <property type="match status" value="1"/>
</dbReference>
<dbReference type="HAMAP" id="MF_01810">
    <property type="entry name" value="YidC_type1"/>
    <property type="match status" value="1"/>
</dbReference>
<dbReference type="InterPro" id="IPR019998">
    <property type="entry name" value="Membr_insert_YidC"/>
</dbReference>
<dbReference type="InterPro" id="IPR028053">
    <property type="entry name" value="Membr_insert_YidC_N"/>
</dbReference>
<dbReference type="InterPro" id="IPR001708">
    <property type="entry name" value="YidC/ALB3/OXA1/COX18"/>
</dbReference>
<dbReference type="InterPro" id="IPR028055">
    <property type="entry name" value="YidC/Oxa/ALB_C"/>
</dbReference>
<dbReference type="InterPro" id="IPR047196">
    <property type="entry name" value="YidC_ALB_C"/>
</dbReference>
<dbReference type="InterPro" id="IPR038221">
    <property type="entry name" value="YidC_periplasmic_sf"/>
</dbReference>
<dbReference type="NCBIfam" id="NF002352">
    <property type="entry name" value="PRK01318.1-3"/>
    <property type="match status" value="1"/>
</dbReference>
<dbReference type="NCBIfam" id="TIGR03593">
    <property type="entry name" value="yidC_nterm"/>
    <property type="match status" value="1"/>
</dbReference>
<dbReference type="NCBIfam" id="TIGR03592">
    <property type="entry name" value="yidC_oxa1_cterm"/>
    <property type="match status" value="1"/>
</dbReference>
<dbReference type="PANTHER" id="PTHR12428:SF65">
    <property type="entry name" value="CYTOCHROME C OXIDASE ASSEMBLY PROTEIN COX18, MITOCHONDRIAL"/>
    <property type="match status" value="1"/>
</dbReference>
<dbReference type="PANTHER" id="PTHR12428">
    <property type="entry name" value="OXA1"/>
    <property type="match status" value="1"/>
</dbReference>
<dbReference type="Pfam" id="PF02096">
    <property type="entry name" value="60KD_IMP"/>
    <property type="match status" value="1"/>
</dbReference>
<dbReference type="Pfam" id="PF14849">
    <property type="entry name" value="YidC_periplas"/>
    <property type="match status" value="1"/>
</dbReference>
<dbReference type="PRINTS" id="PR00701">
    <property type="entry name" value="60KDINNERMP"/>
</dbReference>
<dbReference type="PRINTS" id="PR01900">
    <property type="entry name" value="YIDCPROTEIN"/>
</dbReference>
<organism>
    <name type="scientific">Legionella pneumophila (strain Paris)</name>
    <dbReference type="NCBI Taxonomy" id="297246"/>
    <lineage>
        <taxon>Bacteria</taxon>
        <taxon>Pseudomonadati</taxon>
        <taxon>Pseudomonadota</taxon>
        <taxon>Gammaproteobacteria</taxon>
        <taxon>Legionellales</taxon>
        <taxon>Legionellaceae</taxon>
        <taxon>Legionella</taxon>
    </lineage>
</organism>
<sequence>MDIRRIVLYMALALIGLSLWNAWQIDYPAKQPVEEKTASQLTSDGHLLPQIIPSNAEQPITLKAEEKASSSKQLIQVKTDVLDVDIDLKNGDIVKGLLLDYPLSVEDKNKPFPLLQNQASQRYVANSSLFILDGQTPQSLDFDFTSEKEYYELKSDQNQLIVTLNGKSEDGLDVKKEFVFTKGSYLIEVNYKIANTGNSLWKGYFNTQLLRSSPKEDKSSIFHIGSYTGASFSNPGKNRYQKVSFSDMSKSNLDVDAKGGWIAMQQHYFLSAWVPNADSENKFYTLATDKDYTIGAVSQPITVKPKEDKIVGSKLYIGPEITSVLKGISPSLDLTVDYGILWFLSSLLFSLMKAIYTVVGNWGWSIVLVTVLIKLAFYRLSATSYKSMASMRKLQPKLQALRERYGDDKAKISQATMELYKQEKVNPLGGCLPILIQIPVFIALYWVLLESVELRQAPFIFWINDLASADPYHVLPLIMGATMLIQQKLNPAPADPMQAKVMMFLPILFTGLFWNFPSGLVLYWIVNNTLSILQQWYITRKYSDEKPAKKVVATAK</sequence>
<protein>
    <recommendedName>
        <fullName evidence="1">Membrane protein insertase YidC</fullName>
    </recommendedName>
    <alternativeName>
        <fullName evidence="1">Foldase YidC</fullName>
    </alternativeName>
    <alternativeName>
        <fullName evidence="1">Membrane integrase YidC</fullName>
    </alternativeName>
    <alternativeName>
        <fullName evidence="1">Membrane protein YidC</fullName>
    </alternativeName>
</protein>
<proteinExistence type="inferred from homology"/>
<feature type="chain" id="PRO_1000070112" description="Membrane protein insertase YidC">
    <location>
        <begin position="1"/>
        <end position="556"/>
    </location>
</feature>
<feature type="transmembrane region" description="Helical" evidence="1">
    <location>
        <begin position="6"/>
        <end position="26"/>
    </location>
</feature>
<feature type="transmembrane region" description="Helical" evidence="1">
    <location>
        <begin position="332"/>
        <end position="352"/>
    </location>
</feature>
<feature type="transmembrane region" description="Helical" evidence="1">
    <location>
        <begin position="358"/>
        <end position="378"/>
    </location>
</feature>
<feature type="transmembrane region" description="Helical" evidence="1">
    <location>
        <begin position="428"/>
        <end position="448"/>
    </location>
</feature>
<feature type="transmembrane region" description="Helical" evidence="1">
    <location>
        <begin position="501"/>
        <end position="521"/>
    </location>
</feature>
<name>YIDC_LEGPA</name>